<reference key="1">
    <citation type="journal article" date="2007" name="PLoS Genet.">
        <title>The complete genome sequence of Yersinia pseudotuberculosis IP31758, the causative agent of Far East scarlet-like fever.</title>
        <authorList>
            <person name="Eppinger M."/>
            <person name="Rosovitz M.J."/>
            <person name="Fricke W.F."/>
            <person name="Rasko D.A."/>
            <person name="Kokorina G."/>
            <person name="Fayolle C."/>
            <person name="Lindler L.E."/>
            <person name="Carniel E."/>
            <person name="Ravel J."/>
        </authorList>
    </citation>
    <scope>NUCLEOTIDE SEQUENCE [LARGE SCALE GENOMIC DNA]</scope>
    <source>
        <strain>IP 31758</strain>
    </source>
</reference>
<name>Y2592_YERP3</name>
<sequence>MSAYSRPVLLLLCGLLLFTISIAVLNTLVPLWLSHQQLPTWQVGMVSSSYFTGNLVGTLIAGRFIQQLGFNRSYHCSCILFALATCGLMLTVDFWSWLGWRFLAGIACALIWVIVESALLRSGTLTNRGQLLAAYMMVYYLGTVIGQLLLGIVSTQLLSVIPWVGALVITAMLPLLFAQFSHQSRHESPPIAVWPMLKRRSARLGINGCIISGVLLGSLYGLLPLYLSHKGMSDASVGGWMALLVSSGIIGQWPMGRMADRYGRLLVLRIQVFVVILGSVAILGNYAMAPALFILGCAGFTLYPVAMAWACEKASADELVAMNQALLMSYTLGSLAGPTMTSLLMQRYSDNLLFIMIAGVAFVYLMMLLRKPDHQQTPYAAV</sequence>
<accession>A7FJX9</accession>
<organism>
    <name type="scientific">Yersinia pseudotuberculosis serotype O:1b (strain IP 31758)</name>
    <dbReference type="NCBI Taxonomy" id="349747"/>
    <lineage>
        <taxon>Bacteria</taxon>
        <taxon>Pseudomonadati</taxon>
        <taxon>Pseudomonadota</taxon>
        <taxon>Gammaproteobacteria</taxon>
        <taxon>Enterobacterales</taxon>
        <taxon>Yersiniaceae</taxon>
        <taxon>Yersinia</taxon>
    </lineage>
</organism>
<proteinExistence type="inferred from homology"/>
<dbReference type="EMBL" id="CP000720">
    <property type="protein sequence ID" value="ABS47466.1"/>
    <property type="molecule type" value="Genomic_DNA"/>
</dbReference>
<dbReference type="RefSeq" id="WP_002211335.1">
    <property type="nucleotide sequence ID" value="NC_009708.1"/>
</dbReference>
<dbReference type="SMR" id="A7FJX9"/>
<dbReference type="KEGG" id="ypi:YpsIP31758_2592"/>
<dbReference type="HOGENOM" id="CLU_035018_1_2_6"/>
<dbReference type="Proteomes" id="UP000002412">
    <property type="component" value="Chromosome"/>
</dbReference>
<dbReference type="GO" id="GO:0005886">
    <property type="term" value="C:plasma membrane"/>
    <property type="evidence" value="ECO:0007669"/>
    <property type="project" value="UniProtKB-SubCell"/>
</dbReference>
<dbReference type="GO" id="GO:0022857">
    <property type="term" value="F:transmembrane transporter activity"/>
    <property type="evidence" value="ECO:0007669"/>
    <property type="project" value="UniProtKB-UniRule"/>
</dbReference>
<dbReference type="CDD" id="cd17477">
    <property type="entry name" value="MFS_YcaD_like"/>
    <property type="match status" value="1"/>
</dbReference>
<dbReference type="FunFam" id="1.20.1250.20:FF:000041">
    <property type="entry name" value="Uncharacterized MFS-type transporter YcaD"/>
    <property type="match status" value="1"/>
</dbReference>
<dbReference type="FunFam" id="1.20.1250.20:FF:000066">
    <property type="entry name" value="Uncharacterized MFS-type transporter YcaD"/>
    <property type="match status" value="1"/>
</dbReference>
<dbReference type="Gene3D" id="1.20.1250.20">
    <property type="entry name" value="MFS general substrate transporter like domains"/>
    <property type="match status" value="2"/>
</dbReference>
<dbReference type="HAMAP" id="MF_01149">
    <property type="entry name" value="MFS_YcaD"/>
    <property type="match status" value="1"/>
</dbReference>
<dbReference type="InterPro" id="IPR011701">
    <property type="entry name" value="MFS"/>
</dbReference>
<dbReference type="InterPro" id="IPR020846">
    <property type="entry name" value="MFS_dom"/>
</dbReference>
<dbReference type="InterPro" id="IPR036259">
    <property type="entry name" value="MFS_trans_sf"/>
</dbReference>
<dbReference type="InterPro" id="IPR023745">
    <property type="entry name" value="MFS_YcaD"/>
</dbReference>
<dbReference type="InterPro" id="IPR047200">
    <property type="entry name" value="MFS_YcaD-like"/>
</dbReference>
<dbReference type="NCBIfam" id="NF002962">
    <property type="entry name" value="PRK03633.1"/>
    <property type="match status" value="1"/>
</dbReference>
<dbReference type="PANTHER" id="PTHR23521">
    <property type="entry name" value="TRANSPORTER MFS SUPERFAMILY"/>
    <property type="match status" value="1"/>
</dbReference>
<dbReference type="PANTHER" id="PTHR23521:SF2">
    <property type="entry name" value="TRANSPORTER MFS SUPERFAMILY"/>
    <property type="match status" value="1"/>
</dbReference>
<dbReference type="Pfam" id="PF07690">
    <property type="entry name" value="MFS_1"/>
    <property type="match status" value="1"/>
</dbReference>
<dbReference type="SUPFAM" id="SSF103473">
    <property type="entry name" value="MFS general substrate transporter"/>
    <property type="match status" value="1"/>
</dbReference>
<dbReference type="PROSITE" id="PS50850">
    <property type="entry name" value="MFS"/>
    <property type="match status" value="1"/>
</dbReference>
<feature type="chain" id="PRO_1000085097" description="Uncharacterized MFS-type transporter YpsIP31758_2592">
    <location>
        <begin position="1"/>
        <end position="382"/>
    </location>
</feature>
<feature type="transmembrane region" description="Helical" evidence="1">
    <location>
        <begin position="8"/>
        <end position="28"/>
    </location>
</feature>
<feature type="transmembrane region" description="Helical" evidence="1">
    <location>
        <begin position="41"/>
        <end position="61"/>
    </location>
</feature>
<feature type="transmembrane region" description="Helical" evidence="1">
    <location>
        <begin position="73"/>
        <end position="93"/>
    </location>
</feature>
<feature type="transmembrane region" description="Helical" evidence="1">
    <location>
        <begin position="94"/>
        <end position="114"/>
    </location>
</feature>
<feature type="transmembrane region" description="Helical" evidence="1">
    <location>
        <begin position="133"/>
        <end position="153"/>
    </location>
</feature>
<feature type="transmembrane region" description="Helical" evidence="1">
    <location>
        <begin position="157"/>
        <end position="177"/>
    </location>
</feature>
<feature type="transmembrane region" description="Helical" evidence="1">
    <location>
        <begin position="208"/>
        <end position="228"/>
    </location>
</feature>
<feature type="transmembrane region" description="Helical" evidence="1">
    <location>
        <begin position="235"/>
        <end position="255"/>
    </location>
</feature>
<feature type="transmembrane region" description="Helical" evidence="1">
    <location>
        <begin position="274"/>
        <end position="294"/>
    </location>
</feature>
<feature type="transmembrane region" description="Helical" evidence="1">
    <location>
        <begin position="325"/>
        <end position="345"/>
    </location>
</feature>
<feature type="transmembrane region" description="Helical" evidence="1">
    <location>
        <begin position="349"/>
        <end position="369"/>
    </location>
</feature>
<comment type="subcellular location">
    <subcellularLocation>
        <location evidence="1">Cell inner membrane</location>
        <topology evidence="1">Multi-pass membrane protein</topology>
    </subcellularLocation>
</comment>
<comment type="similarity">
    <text evidence="1">Belongs to the major facilitator superfamily. YcaD (TC 2.A.1.26) family.</text>
</comment>
<keyword id="KW-0997">Cell inner membrane</keyword>
<keyword id="KW-1003">Cell membrane</keyword>
<keyword id="KW-0472">Membrane</keyword>
<keyword id="KW-0812">Transmembrane</keyword>
<keyword id="KW-1133">Transmembrane helix</keyword>
<keyword id="KW-0813">Transport</keyword>
<protein>
    <recommendedName>
        <fullName evidence="1">Uncharacterized MFS-type transporter YpsIP31758_2592</fullName>
    </recommendedName>
</protein>
<evidence type="ECO:0000255" key="1">
    <source>
        <dbReference type="HAMAP-Rule" id="MF_01149"/>
    </source>
</evidence>
<gene>
    <name type="ordered locus">YpsIP31758_2592</name>
</gene>